<accession>A4G6A8</accession>
<organism>
    <name type="scientific">Herminiimonas arsenicoxydans</name>
    <dbReference type="NCBI Taxonomy" id="204773"/>
    <lineage>
        <taxon>Bacteria</taxon>
        <taxon>Pseudomonadati</taxon>
        <taxon>Pseudomonadota</taxon>
        <taxon>Betaproteobacteria</taxon>
        <taxon>Burkholderiales</taxon>
        <taxon>Oxalobacteraceae</taxon>
        <taxon>Herminiimonas</taxon>
    </lineage>
</organism>
<reference key="1">
    <citation type="journal article" date="2007" name="PLoS Genet.">
        <title>A tale of two oxidation states: bacterial colonization of arsenic-rich environments.</title>
        <authorList>
            <person name="Muller D."/>
            <person name="Medigue C."/>
            <person name="Koechler S."/>
            <person name="Barbe V."/>
            <person name="Barakat M."/>
            <person name="Talla E."/>
            <person name="Bonnefoy V."/>
            <person name="Krin E."/>
            <person name="Arsene-Ploetze F."/>
            <person name="Carapito C."/>
            <person name="Chandler M."/>
            <person name="Cournoyer B."/>
            <person name="Cruveiller S."/>
            <person name="Dossat C."/>
            <person name="Duval S."/>
            <person name="Heymann M."/>
            <person name="Leize E."/>
            <person name="Lieutaud A."/>
            <person name="Lievremont D."/>
            <person name="Makita Y."/>
            <person name="Mangenot S."/>
            <person name="Nitschke W."/>
            <person name="Ortet P."/>
            <person name="Perdrial N."/>
            <person name="Schoepp B."/>
            <person name="Siguier P."/>
            <person name="Simeonova D.D."/>
            <person name="Rouy Z."/>
            <person name="Segurens B."/>
            <person name="Turlin E."/>
            <person name="Vallenet D."/>
            <person name="van Dorsselaer A."/>
            <person name="Weiss S."/>
            <person name="Weissenbach J."/>
            <person name="Lett M.-C."/>
            <person name="Danchin A."/>
            <person name="Bertin P.N."/>
        </authorList>
    </citation>
    <scope>NUCLEOTIDE SEQUENCE [LARGE SCALE GENOMIC DNA]</scope>
    <source>
        <strain>ULPAs1</strain>
    </source>
</reference>
<feature type="signal peptide" evidence="1">
    <location>
        <begin position="1"/>
        <end position="18"/>
    </location>
</feature>
<feature type="chain" id="PRO_1000050088" description="Flagellar L-ring protein">
    <location>
        <begin position="19"/>
        <end position="223"/>
    </location>
</feature>
<feature type="lipid moiety-binding region" description="N-palmitoyl cysteine" evidence="1">
    <location>
        <position position="19"/>
    </location>
</feature>
<feature type="lipid moiety-binding region" description="S-diacylglycerol cysteine" evidence="1">
    <location>
        <position position="19"/>
    </location>
</feature>
<proteinExistence type="inferred from homology"/>
<protein>
    <recommendedName>
        <fullName evidence="1">Flagellar L-ring protein</fullName>
    </recommendedName>
    <alternativeName>
        <fullName evidence="1">Basal body L-ring protein</fullName>
    </alternativeName>
</protein>
<keyword id="KW-0975">Bacterial flagellum</keyword>
<keyword id="KW-0998">Cell outer membrane</keyword>
<keyword id="KW-0449">Lipoprotein</keyword>
<keyword id="KW-0472">Membrane</keyword>
<keyword id="KW-0564">Palmitate</keyword>
<keyword id="KW-1185">Reference proteome</keyword>
<keyword id="KW-0732">Signal</keyword>
<name>FLGH_HERAR</name>
<evidence type="ECO:0000255" key="1">
    <source>
        <dbReference type="HAMAP-Rule" id="MF_00415"/>
    </source>
</evidence>
<sequence>MKKSLMALIVVGSFLLSACALRPDTIVNTPLTARPQAASTIAPPANGAIFQAAAYRPMFEDRRARLIGDTITIVINEKSSAGKQAGSAASKTGSVTASAPNVFGLLGSLTNRLSASGSNAIKYEDKGAVTSSNNFISTMTVTVIDVLSNGNLIVAGEKQVSLDKGSEFIRFSGVVDPSTVNSGNIVSSTQVADAKIEYRTNSTVDGAEVASMLARFFLSVLPL</sequence>
<comment type="function">
    <text evidence="1">Assembles around the rod to form the L-ring and probably protects the motor/basal body from shearing forces during rotation.</text>
</comment>
<comment type="subunit">
    <text evidence="1">The basal body constitutes a major portion of the flagellar organelle and consists of four rings (L,P,S, and M) mounted on a central rod.</text>
</comment>
<comment type="subcellular location">
    <subcellularLocation>
        <location evidence="1">Cell outer membrane</location>
        <topology evidence="1">Lipid-anchor</topology>
    </subcellularLocation>
    <subcellularLocation>
        <location evidence="1">Bacterial flagellum basal body</location>
    </subcellularLocation>
</comment>
<comment type="similarity">
    <text evidence="1">Belongs to the FlgH family.</text>
</comment>
<gene>
    <name evidence="1" type="primary">flgH</name>
    <name type="ordered locus">HEAR1894</name>
</gene>
<dbReference type="EMBL" id="CU207211">
    <property type="protein sequence ID" value="CAL62045.1"/>
    <property type="molecule type" value="Genomic_DNA"/>
</dbReference>
<dbReference type="SMR" id="A4G6A8"/>
<dbReference type="STRING" id="204773.HEAR1894"/>
<dbReference type="KEGG" id="har:HEAR1894"/>
<dbReference type="eggNOG" id="COG2063">
    <property type="taxonomic scope" value="Bacteria"/>
</dbReference>
<dbReference type="HOGENOM" id="CLU_069313_0_0_4"/>
<dbReference type="OrthoDB" id="9789463at2"/>
<dbReference type="Proteomes" id="UP000006697">
    <property type="component" value="Chromosome"/>
</dbReference>
<dbReference type="GO" id="GO:0009427">
    <property type="term" value="C:bacterial-type flagellum basal body, distal rod, L ring"/>
    <property type="evidence" value="ECO:0007669"/>
    <property type="project" value="InterPro"/>
</dbReference>
<dbReference type="GO" id="GO:0009279">
    <property type="term" value="C:cell outer membrane"/>
    <property type="evidence" value="ECO:0007669"/>
    <property type="project" value="UniProtKB-SubCell"/>
</dbReference>
<dbReference type="GO" id="GO:0003774">
    <property type="term" value="F:cytoskeletal motor activity"/>
    <property type="evidence" value="ECO:0007669"/>
    <property type="project" value="InterPro"/>
</dbReference>
<dbReference type="GO" id="GO:0071973">
    <property type="term" value="P:bacterial-type flagellum-dependent cell motility"/>
    <property type="evidence" value="ECO:0007669"/>
    <property type="project" value="InterPro"/>
</dbReference>
<dbReference type="HAMAP" id="MF_00415">
    <property type="entry name" value="FlgH"/>
    <property type="match status" value="1"/>
</dbReference>
<dbReference type="InterPro" id="IPR000527">
    <property type="entry name" value="Flag_Lring"/>
</dbReference>
<dbReference type="PANTHER" id="PTHR34933">
    <property type="entry name" value="FLAGELLAR L-RING PROTEIN"/>
    <property type="match status" value="1"/>
</dbReference>
<dbReference type="PANTHER" id="PTHR34933:SF3">
    <property type="entry name" value="FLAGELLAR L-RING PROTEIN"/>
    <property type="match status" value="1"/>
</dbReference>
<dbReference type="Pfam" id="PF02107">
    <property type="entry name" value="FlgH"/>
    <property type="match status" value="1"/>
</dbReference>
<dbReference type="PRINTS" id="PR01008">
    <property type="entry name" value="FLGLRINGFLGH"/>
</dbReference>
<dbReference type="PROSITE" id="PS51257">
    <property type="entry name" value="PROKAR_LIPOPROTEIN"/>
    <property type="match status" value="1"/>
</dbReference>